<gene>
    <name evidence="1" type="primary">disA</name>
    <name type="ordered locus">CLD_0994</name>
</gene>
<comment type="function">
    <text evidence="1">Participates in a DNA-damage check-point that is active prior to asymmetric division when DNA is damaged. DisA forms globular foci that rapidly scan along the chromosomes during sporulation, searching for lesions. When a lesion is present, DisA pauses at the lesion site. This triggers a cellular response that culminates in a temporary block in sporulation initiation.</text>
</comment>
<comment type="function">
    <text evidence="1">Also has diadenylate cyclase activity, catalyzing the condensation of 2 ATP molecules into cyclic di-AMP (c-di-AMP). c-di-AMP acts as a signaling molecule that couples DNA integrity with progression of sporulation. The rise in c-di-AMP level generated by DisA while scanning the chromosome, operates as a positive signal that advances sporulation; upon encountering a lesion, the DisA focus arrests at the damaged site and halts c-di-AMP synthesis.</text>
</comment>
<comment type="catalytic activity">
    <reaction evidence="1">
        <text>2 ATP = 3',3'-c-di-AMP + 2 diphosphate</text>
        <dbReference type="Rhea" id="RHEA:35655"/>
        <dbReference type="ChEBI" id="CHEBI:30616"/>
        <dbReference type="ChEBI" id="CHEBI:33019"/>
        <dbReference type="ChEBI" id="CHEBI:71500"/>
        <dbReference type="EC" id="2.7.7.85"/>
    </reaction>
</comment>
<comment type="cofactor">
    <cofactor evidence="1">
        <name>Mg(2+)</name>
        <dbReference type="ChEBI" id="CHEBI:18420"/>
    </cofactor>
</comment>
<comment type="subunit">
    <text evidence="1">Homooctamer.</text>
</comment>
<comment type="similarity">
    <text evidence="1">Belongs to the DisA family.</text>
</comment>
<proteinExistence type="inferred from homology"/>
<accession>B1IGI2</accession>
<dbReference type="EC" id="2.7.7.85" evidence="1"/>
<dbReference type="EMBL" id="CP000939">
    <property type="protein sequence ID" value="ACA44598.1"/>
    <property type="molecule type" value="Genomic_DNA"/>
</dbReference>
<dbReference type="RefSeq" id="WP_003393302.1">
    <property type="nucleotide sequence ID" value="NC_010516.1"/>
</dbReference>
<dbReference type="SMR" id="B1IGI2"/>
<dbReference type="GeneID" id="5187763"/>
<dbReference type="KEGG" id="cbb:CLD_0994"/>
<dbReference type="HOGENOM" id="CLU_787128_0_0_9"/>
<dbReference type="Proteomes" id="UP000008541">
    <property type="component" value="Chromosome"/>
</dbReference>
<dbReference type="GO" id="GO:0004016">
    <property type="term" value="F:adenylate cyclase activity"/>
    <property type="evidence" value="ECO:0007669"/>
    <property type="project" value="TreeGrafter"/>
</dbReference>
<dbReference type="GO" id="GO:0005524">
    <property type="term" value="F:ATP binding"/>
    <property type="evidence" value="ECO:0007669"/>
    <property type="project" value="UniProtKB-UniRule"/>
</dbReference>
<dbReference type="GO" id="GO:0106408">
    <property type="term" value="F:diadenylate cyclase activity"/>
    <property type="evidence" value="ECO:0007669"/>
    <property type="project" value="UniProtKB-EC"/>
</dbReference>
<dbReference type="GO" id="GO:0003677">
    <property type="term" value="F:DNA binding"/>
    <property type="evidence" value="ECO:0007669"/>
    <property type="project" value="UniProtKB-UniRule"/>
</dbReference>
<dbReference type="GO" id="GO:0006281">
    <property type="term" value="P:DNA repair"/>
    <property type="evidence" value="ECO:0007669"/>
    <property type="project" value="UniProtKB-UniRule"/>
</dbReference>
<dbReference type="FunFam" id="1.10.150.20:FF:000023">
    <property type="entry name" value="DNA integrity scanning protein DisA"/>
    <property type="match status" value="1"/>
</dbReference>
<dbReference type="FunFam" id="3.40.1700.10:FF:000001">
    <property type="entry name" value="DNA integrity scanning protein DisA"/>
    <property type="match status" value="1"/>
</dbReference>
<dbReference type="Gene3D" id="1.10.150.20">
    <property type="entry name" value="5' to 3' exonuclease, C-terminal subdomain"/>
    <property type="match status" value="1"/>
</dbReference>
<dbReference type="Gene3D" id="1.20.1260.110">
    <property type="entry name" value="DNA integrity scanning linker region"/>
    <property type="match status" value="1"/>
</dbReference>
<dbReference type="Gene3D" id="3.40.1700.10">
    <property type="entry name" value="DNA integrity scanning protein, DisA, N-terminal domain"/>
    <property type="match status" value="1"/>
</dbReference>
<dbReference type="HAMAP" id="MF_01438">
    <property type="entry name" value="DisA"/>
    <property type="match status" value="1"/>
</dbReference>
<dbReference type="InterPro" id="IPR050338">
    <property type="entry name" value="DisA"/>
</dbReference>
<dbReference type="InterPro" id="IPR038331">
    <property type="entry name" value="DisA_sf"/>
</dbReference>
<dbReference type="InterPro" id="IPR036888">
    <property type="entry name" value="DNA_integrity_DisA_N_sf"/>
</dbReference>
<dbReference type="InterPro" id="IPR018906">
    <property type="entry name" value="DNA_integrity_scan_DisA_link"/>
</dbReference>
<dbReference type="InterPro" id="IPR003390">
    <property type="entry name" value="DNA_integrity_scan_DisA_N"/>
</dbReference>
<dbReference type="InterPro" id="IPR023763">
    <property type="entry name" value="DNA_integrity_scanning_protein"/>
</dbReference>
<dbReference type="InterPro" id="IPR010994">
    <property type="entry name" value="RuvA_2-like"/>
</dbReference>
<dbReference type="NCBIfam" id="NF010009">
    <property type="entry name" value="PRK13482.1"/>
    <property type="match status" value="1"/>
</dbReference>
<dbReference type="PANTHER" id="PTHR34185">
    <property type="entry name" value="DIADENYLATE CYCLASE"/>
    <property type="match status" value="1"/>
</dbReference>
<dbReference type="PANTHER" id="PTHR34185:SF3">
    <property type="entry name" value="DNA INTEGRITY SCANNING PROTEIN DISA"/>
    <property type="match status" value="1"/>
</dbReference>
<dbReference type="Pfam" id="PF02457">
    <property type="entry name" value="DAC"/>
    <property type="match status" value="1"/>
</dbReference>
<dbReference type="Pfam" id="PF10635">
    <property type="entry name" value="DisA-linker"/>
    <property type="match status" value="1"/>
</dbReference>
<dbReference type="SUPFAM" id="SSF47781">
    <property type="entry name" value="RuvA domain 2-like"/>
    <property type="match status" value="1"/>
</dbReference>
<dbReference type="SUPFAM" id="SSF143597">
    <property type="entry name" value="YojJ-like"/>
    <property type="match status" value="1"/>
</dbReference>
<dbReference type="PROSITE" id="PS51794">
    <property type="entry name" value="DAC"/>
    <property type="match status" value="1"/>
</dbReference>
<organism>
    <name type="scientific">Clostridium botulinum (strain Okra / Type B1)</name>
    <dbReference type="NCBI Taxonomy" id="498213"/>
    <lineage>
        <taxon>Bacteria</taxon>
        <taxon>Bacillati</taxon>
        <taxon>Bacillota</taxon>
        <taxon>Clostridia</taxon>
        <taxon>Eubacteriales</taxon>
        <taxon>Clostridiaceae</taxon>
        <taxon>Clostridium</taxon>
    </lineage>
</organism>
<protein>
    <recommendedName>
        <fullName evidence="1">DNA integrity scanning protein DisA</fullName>
    </recommendedName>
    <alternativeName>
        <fullName evidence="1">Cyclic di-AMP synthase</fullName>
        <shortName evidence="1">c-di-AMP synthase</shortName>
    </alternativeName>
    <alternativeName>
        <fullName evidence="1">Diadenylate cyclase</fullName>
        <ecNumber evidence="1">2.7.7.85</ecNumber>
    </alternativeName>
</protein>
<reference key="1">
    <citation type="journal article" date="2007" name="PLoS ONE">
        <title>Analysis of the neurotoxin complex genes in Clostridium botulinum A1-A4 and B1 strains: BoNT/A3, /Ba4 and /B1 clusters are located within plasmids.</title>
        <authorList>
            <person name="Smith T.J."/>
            <person name="Hill K.K."/>
            <person name="Foley B.T."/>
            <person name="Detter J.C."/>
            <person name="Munk A.C."/>
            <person name="Bruce D.C."/>
            <person name="Doggett N.A."/>
            <person name="Smith L.A."/>
            <person name="Marks J.D."/>
            <person name="Xie G."/>
            <person name="Brettin T.S."/>
        </authorList>
    </citation>
    <scope>NUCLEOTIDE SEQUENCE [LARGE SCALE GENOMIC DNA]</scope>
    <source>
        <strain>Okra / Type B1</strain>
    </source>
</reference>
<feature type="chain" id="PRO_1000145861" description="DNA integrity scanning protein DisA">
    <location>
        <begin position="1"/>
        <end position="353"/>
    </location>
</feature>
<feature type="domain" description="DAC" evidence="2">
    <location>
        <begin position="6"/>
        <end position="144"/>
    </location>
</feature>
<feature type="binding site" evidence="1">
    <location>
        <position position="73"/>
    </location>
    <ligand>
        <name>ATP</name>
        <dbReference type="ChEBI" id="CHEBI:30616"/>
    </ligand>
</feature>
<feature type="binding site" evidence="1">
    <location>
        <position position="91"/>
    </location>
    <ligand>
        <name>ATP</name>
        <dbReference type="ChEBI" id="CHEBI:30616"/>
    </ligand>
</feature>
<feature type="binding site" evidence="1">
    <location>
        <begin position="104"/>
        <end position="108"/>
    </location>
    <ligand>
        <name>ATP</name>
        <dbReference type="ChEBI" id="CHEBI:30616"/>
    </ligand>
</feature>
<keyword id="KW-0067">ATP-binding</keyword>
<keyword id="KW-0227">DNA damage</keyword>
<keyword id="KW-0234">DNA repair</keyword>
<keyword id="KW-0238">DNA-binding</keyword>
<keyword id="KW-0460">Magnesium</keyword>
<keyword id="KW-0547">Nucleotide-binding</keyword>
<keyword id="KW-0548">Nucleotidyltransferase</keyword>
<keyword id="KW-0808">Transferase</keyword>
<evidence type="ECO:0000255" key="1">
    <source>
        <dbReference type="HAMAP-Rule" id="MF_01438"/>
    </source>
</evidence>
<evidence type="ECO:0000255" key="2">
    <source>
        <dbReference type="PROSITE-ProRule" id="PRU01130"/>
    </source>
</evidence>
<name>DISA_CLOBK</name>
<sequence length="353" mass="39655">MRIEKDKELMNILKIMAPGTPLREGLENILRAKTGGLLILGDSDQILKLVDGGFKINSEYSPSYVYELAKMDGSIVLSSDLKKILCANAQLIPDSSIPTFETGTRHRTADRVAKQTGAIVIAISQRRNIITVYKGGIKYVLRDSSIILARANQALQTLEKYVAVLDRVVNNLNILEFKDIATLFDVVTAIQRSEMVMRIVSEIERYICELGNEGRLIDMQLSELIKSVEEDGILLIRDYCRSNMEYEDIYKQIQGLSSEELLNLDGLSKIIGYTGVPLVDTLISPRGYRMINKIPRIPSNVIENLVANFNQLKCVMEASYEQLDNVEGIGEARAKAIKNGLRRLREQIMLDKV</sequence>